<protein>
    <recommendedName>
        <fullName>V-type ATP synthase subunit E</fullName>
    </recommendedName>
    <alternativeName>
        <fullName>V-ATPase subunit E</fullName>
    </alternativeName>
</protein>
<feature type="chain" id="PRO_0000117334" description="V-type ATP synthase subunit E">
    <location>
        <begin position="1"/>
        <end position="188"/>
    </location>
</feature>
<feature type="sequence conflict" description="In Ref. 1; BAA09870." evidence="1" ref="1">
    <original>A</original>
    <variation>D</variation>
    <location>
        <position position="38"/>
    </location>
</feature>
<feature type="helix" evidence="3">
    <location>
        <begin position="3"/>
        <end position="93"/>
    </location>
</feature>
<feature type="helix" evidence="3">
    <location>
        <begin position="94"/>
        <end position="96"/>
    </location>
</feature>
<feature type="helix" evidence="3">
    <location>
        <begin position="100"/>
        <end position="114"/>
    </location>
</feature>
<feature type="strand" evidence="3">
    <location>
        <begin position="120"/>
        <end position="123"/>
    </location>
</feature>
<feature type="turn" evidence="3">
    <location>
        <begin position="125"/>
        <end position="127"/>
    </location>
</feature>
<feature type="helix" evidence="3">
    <location>
        <begin position="128"/>
        <end position="138"/>
    </location>
</feature>
<feature type="strand" evidence="3">
    <location>
        <begin position="141"/>
        <end position="144"/>
    </location>
</feature>
<feature type="strand" evidence="3">
    <location>
        <begin position="150"/>
        <end position="155"/>
    </location>
</feature>
<feature type="strand" evidence="2">
    <location>
        <begin position="157"/>
        <end position="159"/>
    </location>
</feature>
<feature type="strand" evidence="3">
    <location>
        <begin position="162"/>
        <end position="166"/>
    </location>
</feature>
<feature type="helix" evidence="3">
    <location>
        <begin position="167"/>
        <end position="186"/>
    </location>
</feature>
<proteinExistence type="evidence at protein level"/>
<evidence type="ECO:0000305" key="1"/>
<evidence type="ECO:0007829" key="2">
    <source>
        <dbReference type="PDB" id="3K5B"/>
    </source>
</evidence>
<evidence type="ECO:0007829" key="3">
    <source>
        <dbReference type="PDB" id="3V6I"/>
    </source>
</evidence>
<sequence>MSKLEAILSQEVEAEIQALLQEAEAKAEAVKREAEEKAKALLQARERALEAQYRAALRRAESAGELLVATARTQARGEVLEEVRRRVREALEALPQKPEWPEVVRKLALEALEALPGAKALVANPEDLPHLEALARERGVELQAEPALRLGVRAVGAEGKTQVENSLLARLDRAWDALSSKVAQALWG</sequence>
<gene>
    <name type="primary">atpE</name>
    <name type="synonym">vatE</name>
    <name type="ordered locus">TTHA1276</name>
</gene>
<dbReference type="EMBL" id="D63799">
    <property type="protein sequence ID" value="BAA09870.1"/>
    <property type="molecule type" value="Genomic_DNA"/>
</dbReference>
<dbReference type="EMBL" id="AP008226">
    <property type="protein sequence ID" value="BAD71099.1"/>
    <property type="molecule type" value="Genomic_DNA"/>
</dbReference>
<dbReference type="RefSeq" id="WP_011228563.1">
    <property type="nucleotide sequence ID" value="NC_006461.1"/>
</dbReference>
<dbReference type="RefSeq" id="YP_144542.1">
    <property type="nucleotide sequence ID" value="NC_006461.1"/>
</dbReference>
<dbReference type="PDB" id="3J0J">
    <property type="method" value="EM"/>
    <property type="resolution" value="9.70 A"/>
    <property type="chains" value="J/L=1-188"/>
</dbReference>
<dbReference type="PDB" id="3K5B">
    <property type="method" value="X-ray"/>
    <property type="resolution" value="3.10 A"/>
    <property type="chains" value="A/E=1-188"/>
</dbReference>
<dbReference type="PDB" id="3V6I">
    <property type="method" value="X-ray"/>
    <property type="resolution" value="2.25 A"/>
    <property type="chains" value="A/Y=2-188"/>
</dbReference>
<dbReference type="PDB" id="5GAR">
    <property type="method" value="EM"/>
    <property type="resolution" value="6.40 A"/>
    <property type="chains" value="G/H=3-188"/>
</dbReference>
<dbReference type="PDB" id="5GAS">
    <property type="method" value="EM"/>
    <property type="resolution" value="9.50 A"/>
    <property type="chains" value="G/H=3-188"/>
</dbReference>
<dbReference type="PDB" id="5TSJ">
    <property type="method" value="EM"/>
    <property type="resolution" value="8.70 A"/>
    <property type="chains" value="G/H=3-188"/>
</dbReference>
<dbReference type="PDB" id="5Y5X">
    <property type="method" value="EM"/>
    <property type="resolution" value="5.00 A"/>
    <property type="chains" value="J/L=1-188"/>
</dbReference>
<dbReference type="PDB" id="5Y5Y">
    <property type="method" value="EM"/>
    <property type="resolution" value="4.70 A"/>
    <property type="chains" value="J/L=1-188"/>
</dbReference>
<dbReference type="PDB" id="5Y5Z">
    <property type="method" value="EM"/>
    <property type="resolution" value="6.70 A"/>
    <property type="chains" value="J/L=1-188"/>
</dbReference>
<dbReference type="PDB" id="5Y60">
    <property type="method" value="EM"/>
    <property type="resolution" value="7.50 A"/>
    <property type="chains" value="J/L=1-188"/>
</dbReference>
<dbReference type="PDB" id="6LY9">
    <property type="method" value="EM"/>
    <property type="resolution" value="3.93 A"/>
    <property type="chains" value="L=1-188"/>
</dbReference>
<dbReference type="PDB" id="6QUM">
    <property type="method" value="EM"/>
    <property type="resolution" value="3.25 A"/>
    <property type="chains" value="J/L=1-188"/>
</dbReference>
<dbReference type="PDB" id="6R0W">
    <property type="method" value="EM"/>
    <property type="resolution" value="3.60 A"/>
    <property type="chains" value="J/L=1-188"/>
</dbReference>
<dbReference type="PDB" id="6R0Y">
    <property type="method" value="EM"/>
    <property type="resolution" value="3.90 A"/>
    <property type="chains" value="J/L=1-188"/>
</dbReference>
<dbReference type="PDB" id="6R0Z">
    <property type="method" value="EM"/>
    <property type="resolution" value="3.80 A"/>
    <property type="chains" value="J/L=1-188"/>
</dbReference>
<dbReference type="PDB" id="6R10">
    <property type="method" value="EM"/>
    <property type="resolution" value="4.30 A"/>
    <property type="chains" value="J/L=1-188"/>
</dbReference>
<dbReference type="PDB" id="7VAI">
    <property type="method" value="EM"/>
    <property type="resolution" value="3.10 A"/>
    <property type="chains" value="J/L=1-188"/>
</dbReference>
<dbReference type="PDB" id="7VAJ">
    <property type="method" value="EM"/>
    <property type="resolution" value="3.10 A"/>
    <property type="chains" value="J/L=1-188"/>
</dbReference>
<dbReference type="PDB" id="7VAK">
    <property type="method" value="EM"/>
    <property type="resolution" value="4.70 A"/>
    <property type="chains" value="J/L=1-188"/>
</dbReference>
<dbReference type="PDB" id="7VAL">
    <property type="method" value="EM"/>
    <property type="resolution" value="3.10 A"/>
    <property type="chains" value="J/L=1-188"/>
</dbReference>
<dbReference type="PDB" id="7VAM">
    <property type="method" value="EM"/>
    <property type="resolution" value="3.20 A"/>
    <property type="chains" value="J/L=1-188"/>
</dbReference>
<dbReference type="PDB" id="7VAN">
    <property type="method" value="EM"/>
    <property type="resolution" value="3.00 A"/>
    <property type="chains" value="J/L=1-188"/>
</dbReference>
<dbReference type="PDB" id="7VAO">
    <property type="method" value="EM"/>
    <property type="resolution" value="3.40 A"/>
    <property type="chains" value="J/L=1-188"/>
</dbReference>
<dbReference type="PDB" id="7VAP">
    <property type="method" value="EM"/>
    <property type="resolution" value="3.00 A"/>
    <property type="chains" value="J/L=1-188"/>
</dbReference>
<dbReference type="PDB" id="7VAQ">
    <property type="method" value="EM"/>
    <property type="resolution" value="3.60 A"/>
    <property type="chains" value="J/L=1-188"/>
</dbReference>
<dbReference type="PDB" id="7VAR">
    <property type="method" value="EM"/>
    <property type="resolution" value="2.90 A"/>
    <property type="chains" value="J/L=1-188"/>
</dbReference>
<dbReference type="PDB" id="7VAS">
    <property type="method" value="EM"/>
    <property type="resolution" value="3.00 A"/>
    <property type="chains" value="J/L=1-188"/>
</dbReference>
<dbReference type="PDB" id="7VAT">
    <property type="method" value="EM"/>
    <property type="resolution" value="3.20 A"/>
    <property type="chains" value="J/L=1-188"/>
</dbReference>
<dbReference type="PDB" id="7VAU">
    <property type="method" value="EM"/>
    <property type="resolution" value="3.30 A"/>
    <property type="chains" value="J/L=1-188"/>
</dbReference>
<dbReference type="PDB" id="7VAV">
    <property type="method" value="EM"/>
    <property type="resolution" value="2.80 A"/>
    <property type="chains" value="J/L=1-188"/>
</dbReference>
<dbReference type="PDB" id="7VAW">
    <property type="method" value="EM"/>
    <property type="resolution" value="2.70 A"/>
    <property type="chains" value="J/L=1-188"/>
</dbReference>
<dbReference type="PDB" id="7VAX">
    <property type="method" value="EM"/>
    <property type="resolution" value="2.90 A"/>
    <property type="chains" value="J/L=1-188"/>
</dbReference>
<dbReference type="PDB" id="7VAY">
    <property type="method" value="EM"/>
    <property type="resolution" value="3.30 A"/>
    <property type="chains" value="J/L=1-188"/>
</dbReference>
<dbReference type="PDB" id="7VB0">
    <property type="method" value="EM"/>
    <property type="resolution" value="3.60 A"/>
    <property type="chains" value="J/L=1-188"/>
</dbReference>
<dbReference type="PDB" id="8GXU">
    <property type="method" value="EM"/>
    <property type="resolution" value="2.50 A"/>
    <property type="chains" value="J/L=1-188"/>
</dbReference>
<dbReference type="PDB" id="8GXW">
    <property type="method" value="EM"/>
    <property type="resolution" value="2.70 A"/>
    <property type="chains" value="J/L=1-188"/>
</dbReference>
<dbReference type="PDB" id="8GXX">
    <property type="method" value="EM"/>
    <property type="resolution" value="3.00 A"/>
    <property type="chains" value="J/L=1-188"/>
</dbReference>
<dbReference type="PDB" id="8GXY">
    <property type="method" value="EM"/>
    <property type="resolution" value="2.80 A"/>
    <property type="chains" value="J/L=1-188"/>
</dbReference>
<dbReference type="PDB" id="8GXZ">
    <property type="method" value="EM"/>
    <property type="resolution" value="3.10 A"/>
    <property type="chains" value="J/L=1-188"/>
</dbReference>
<dbReference type="PDB" id="8YWT">
    <property type="method" value="EM"/>
    <property type="resolution" value="2.80 A"/>
    <property type="chains" value="L=1-188"/>
</dbReference>
<dbReference type="PDBsum" id="3J0J"/>
<dbReference type="PDBsum" id="3K5B"/>
<dbReference type="PDBsum" id="3V6I"/>
<dbReference type="PDBsum" id="5GAR"/>
<dbReference type="PDBsum" id="5GAS"/>
<dbReference type="PDBsum" id="5TSJ"/>
<dbReference type="PDBsum" id="5Y5X"/>
<dbReference type="PDBsum" id="5Y5Y"/>
<dbReference type="PDBsum" id="5Y5Z"/>
<dbReference type="PDBsum" id="5Y60"/>
<dbReference type="PDBsum" id="6LY9"/>
<dbReference type="PDBsum" id="6QUM"/>
<dbReference type="PDBsum" id="6R0W"/>
<dbReference type="PDBsum" id="6R0Y"/>
<dbReference type="PDBsum" id="6R0Z"/>
<dbReference type="PDBsum" id="6R10"/>
<dbReference type="PDBsum" id="7VAI"/>
<dbReference type="PDBsum" id="7VAJ"/>
<dbReference type="PDBsum" id="7VAK"/>
<dbReference type="PDBsum" id="7VAL"/>
<dbReference type="PDBsum" id="7VAM"/>
<dbReference type="PDBsum" id="7VAN"/>
<dbReference type="PDBsum" id="7VAO"/>
<dbReference type="PDBsum" id="7VAP"/>
<dbReference type="PDBsum" id="7VAQ"/>
<dbReference type="PDBsum" id="7VAR"/>
<dbReference type="PDBsum" id="7VAS"/>
<dbReference type="PDBsum" id="7VAT"/>
<dbReference type="PDBsum" id="7VAU"/>
<dbReference type="PDBsum" id="7VAV"/>
<dbReference type="PDBsum" id="7VAW"/>
<dbReference type="PDBsum" id="7VAX"/>
<dbReference type="PDBsum" id="7VAY"/>
<dbReference type="PDBsum" id="7VB0"/>
<dbReference type="PDBsum" id="8GXU"/>
<dbReference type="PDBsum" id="8GXW"/>
<dbReference type="PDBsum" id="8GXX"/>
<dbReference type="PDBsum" id="8GXY"/>
<dbReference type="PDBsum" id="8GXZ"/>
<dbReference type="PDBsum" id="8YWT"/>
<dbReference type="EMDB" id="EMD-30015"/>
<dbReference type="EMDB" id="EMD-31841"/>
<dbReference type="EMDB" id="EMD-31842"/>
<dbReference type="EMDB" id="EMD-31843"/>
<dbReference type="EMDB" id="EMD-31844"/>
<dbReference type="EMDB" id="EMD-31845"/>
<dbReference type="EMDB" id="EMD-31846"/>
<dbReference type="EMDB" id="EMD-31847"/>
<dbReference type="EMDB" id="EMD-31848"/>
<dbReference type="EMDB" id="EMD-31849"/>
<dbReference type="EMDB" id="EMD-31850"/>
<dbReference type="EMDB" id="EMD-31851"/>
<dbReference type="EMDB" id="EMD-31852"/>
<dbReference type="EMDB" id="EMD-31853"/>
<dbReference type="EMDB" id="EMD-31854"/>
<dbReference type="EMDB" id="EMD-31855"/>
<dbReference type="EMDB" id="EMD-31856"/>
<dbReference type="EMDB" id="EMD-31857"/>
<dbReference type="EMDB" id="EMD-31858"/>
<dbReference type="EMDB" id="EMD-31859"/>
<dbReference type="EMDB" id="EMD-31860"/>
<dbReference type="EMDB" id="EMD-31861"/>
<dbReference type="EMDB" id="EMD-31862"/>
<dbReference type="EMDB" id="EMD-31863"/>
<dbReference type="EMDB" id="EMD-31864"/>
<dbReference type="EMDB" id="EMD-31865"/>
<dbReference type="EMDB" id="EMD-31866"/>
<dbReference type="EMDB" id="EMD-31867"/>
<dbReference type="EMDB" id="EMD-31868"/>
<dbReference type="EMDB" id="EMD-31869"/>
<dbReference type="EMDB" id="EMD-31870"/>
<dbReference type="EMDB" id="EMD-31871"/>
<dbReference type="EMDB" id="EMD-31872"/>
<dbReference type="EMDB" id="EMD-31873"/>
<dbReference type="EMDB" id="EMD-34362"/>
<dbReference type="EMDB" id="EMD-34363"/>
<dbReference type="EMDB" id="EMD-34364"/>
<dbReference type="EMDB" id="EMD-34365"/>
<dbReference type="EMDB" id="EMD-34366"/>
<dbReference type="EMDB" id="EMD-39644"/>
<dbReference type="EMDB" id="EMD-4640"/>
<dbReference type="EMDB" id="EMD-4699"/>
<dbReference type="EMDB" id="EMD-4700"/>
<dbReference type="EMDB" id="EMD-4702"/>
<dbReference type="EMDB" id="EMD-4703"/>
<dbReference type="EMDB" id="EMD-5335"/>
<dbReference type="EMDB" id="EMD-6810"/>
<dbReference type="EMDB" id="EMD-6811"/>
<dbReference type="EMDB" id="EMD-6812"/>
<dbReference type="EMDB" id="EMD-6813"/>
<dbReference type="EMDB" id="EMD-8016"/>
<dbReference type="EMDB" id="EMD-8017"/>
<dbReference type="EMDB" id="EMD-8462"/>
<dbReference type="SMR" id="P74901"/>
<dbReference type="DIP" id="DIP-58993N"/>
<dbReference type="IntAct" id="P74901">
    <property type="interactions" value="1"/>
</dbReference>
<dbReference type="TCDB" id="3.A.2.2.1">
    <property type="family name" value="the h+- or na+-translocating f-type, v-type and a-type atpase (f-atpase) superfamily"/>
</dbReference>
<dbReference type="EnsemblBacteria" id="BAD71099">
    <property type="protein sequence ID" value="BAD71099"/>
    <property type="gene ID" value="BAD71099"/>
</dbReference>
<dbReference type="GeneID" id="3168454"/>
<dbReference type="KEGG" id="ttj:TTHA1276"/>
<dbReference type="PATRIC" id="fig|300852.9.peg.1255"/>
<dbReference type="eggNOG" id="COG1390">
    <property type="taxonomic scope" value="Bacteria"/>
</dbReference>
<dbReference type="HOGENOM" id="CLU_123924_0_0_0"/>
<dbReference type="EvolutionaryTrace" id="P74901"/>
<dbReference type="Proteomes" id="UP000000532">
    <property type="component" value="Chromosome"/>
</dbReference>
<dbReference type="GO" id="GO:0033178">
    <property type="term" value="C:proton-transporting two-sector ATPase complex, catalytic domain"/>
    <property type="evidence" value="ECO:0007669"/>
    <property type="project" value="InterPro"/>
</dbReference>
<dbReference type="GO" id="GO:0005524">
    <property type="term" value="F:ATP binding"/>
    <property type="evidence" value="ECO:0007669"/>
    <property type="project" value="UniProtKB-UniRule"/>
</dbReference>
<dbReference type="GO" id="GO:0046933">
    <property type="term" value="F:proton-transporting ATP synthase activity, rotational mechanism"/>
    <property type="evidence" value="ECO:0007669"/>
    <property type="project" value="UniProtKB-UniRule"/>
</dbReference>
<dbReference type="GO" id="GO:0046961">
    <property type="term" value="F:proton-transporting ATPase activity, rotational mechanism"/>
    <property type="evidence" value="ECO:0007669"/>
    <property type="project" value="InterPro"/>
</dbReference>
<dbReference type="GO" id="GO:0042777">
    <property type="term" value="P:proton motive force-driven plasma membrane ATP synthesis"/>
    <property type="evidence" value="ECO:0007669"/>
    <property type="project" value="UniProtKB-UniRule"/>
</dbReference>
<dbReference type="Gene3D" id="3.30.2320.30">
    <property type="entry name" value="ATP synthase, E subunit, C-terminal"/>
    <property type="match status" value="1"/>
</dbReference>
<dbReference type="Gene3D" id="1.20.5.620">
    <property type="entry name" value="F1F0 ATP synthase subunit B, membrane domain"/>
    <property type="match status" value="1"/>
</dbReference>
<dbReference type="HAMAP" id="MF_00311">
    <property type="entry name" value="ATP_synth_E_arch"/>
    <property type="match status" value="1"/>
</dbReference>
<dbReference type="InterPro" id="IPR038495">
    <property type="entry name" value="ATPase_E_C"/>
</dbReference>
<dbReference type="InterPro" id="IPR002842">
    <property type="entry name" value="ATPase_V1_Esu"/>
</dbReference>
<dbReference type="Pfam" id="PF01991">
    <property type="entry name" value="vATP-synt_E"/>
    <property type="match status" value="1"/>
</dbReference>
<dbReference type="SUPFAM" id="SSF160527">
    <property type="entry name" value="V-type ATPase subunit E-like"/>
    <property type="match status" value="1"/>
</dbReference>
<accession>P74901</accession>
<accession>Q5SIT8</accession>
<organism>
    <name type="scientific">Thermus thermophilus (strain ATCC 27634 / DSM 579 / HB8)</name>
    <dbReference type="NCBI Taxonomy" id="300852"/>
    <lineage>
        <taxon>Bacteria</taxon>
        <taxon>Thermotogati</taxon>
        <taxon>Deinococcota</taxon>
        <taxon>Deinococci</taxon>
        <taxon>Thermales</taxon>
        <taxon>Thermaceae</taxon>
        <taxon>Thermus</taxon>
    </lineage>
</organism>
<reference key="1">
    <citation type="journal article" date="2000" name="J. Biol. Chem.">
        <title>V-type H+-ATPase/synthase from a thermophilic eubacterium, Thermus thermophilus. Subunit structure and operon.</title>
        <authorList>
            <person name="Yokoyama K."/>
            <person name="Ohkuma S."/>
            <person name="Taguchi H."/>
            <person name="Yasunaga T."/>
            <person name="Wakabayashi T."/>
            <person name="Yoshida M."/>
        </authorList>
    </citation>
    <scope>NUCLEOTIDE SEQUENCE [GENOMIC DNA]</scope>
</reference>
<reference key="2">
    <citation type="submission" date="2004-11" db="EMBL/GenBank/DDBJ databases">
        <title>Complete genome sequence of Thermus thermophilus HB8.</title>
        <authorList>
            <person name="Masui R."/>
            <person name="Kurokawa K."/>
            <person name="Nakagawa N."/>
            <person name="Tokunaga F."/>
            <person name="Koyama Y."/>
            <person name="Shibata T."/>
            <person name="Oshima T."/>
            <person name="Yokoyama S."/>
            <person name="Yasunaga T."/>
            <person name="Kuramitsu S."/>
        </authorList>
    </citation>
    <scope>NUCLEOTIDE SEQUENCE [LARGE SCALE GENOMIC DNA]</scope>
    <source>
        <strain>ATCC 27634 / DSM 579 / HB8</strain>
    </source>
</reference>
<name>VATE_THET8</name>
<keyword id="KW-0002">3D-structure</keyword>
<keyword id="KW-0066">ATP synthesis</keyword>
<keyword id="KW-0375">Hydrogen ion transport</keyword>
<keyword id="KW-0406">Ion transport</keyword>
<keyword id="KW-1185">Reference proteome</keyword>
<keyword id="KW-0813">Transport</keyword>
<comment type="function">
    <text>Produces ATP from ADP in the presence of a proton gradient across the membrane.</text>
</comment>
<comment type="interaction">
    <interactant intactId="EBI-9016957">
        <id>P74901</id>
    </interactant>
    <interactant intactId="EBI-9016962">
        <id>Q5SIT5</id>
        <label>TTHA1279</label>
    </interactant>
    <organismsDiffer>false</organismsDiffer>
    <experiments>4</experiments>
</comment>
<comment type="similarity">
    <text evidence="1">Belongs to the V-ATPase E subunit family.</text>
</comment>